<sequence>MKNLIAELLLKLAQKEEESKELVAQVEALEIIVTAMLRNMAQNEQEMLIRQVEGALEGVKPDASVPDHDTELLRQYVKKLLRHPRH</sequence>
<accession>B5EWR4</accession>
<gene>
    <name evidence="1" type="primary">iraP</name>
    <name type="ordered locus">SeAg_B0419</name>
</gene>
<reference key="1">
    <citation type="journal article" date="2011" name="J. Bacteriol.">
        <title>Comparative genomics of 28 Salmonella enterica isolates: evidence for CRISPR-mediated adaptive sublineage evolution.</title>
        <authorList>
            <person name="Fricke W.F."/>
            <person name="Mammel M.K."/>
            <person name="McDermott P.F."/>
            <person name="Tartera C."/>
            <person name="White D.G."/>
            <person name="Leclerc J.E."/>
            <person name="Ravel J."/>
            <person name="Cebula T.A."/>
        </authorList>
    </citation>
    <scope>NUCLEOTIDE SEQUENCE [LARGE SCALE GENOMIC DNA]</scope>
    <source>
        <strain>SL483</strain>
    </source>
</reference>
<comment type="function">
    <text evidence="1">Inhibits RpoS proteolysis by regulating RssB activity, thereby increasing the stability of the sigma stress factor RpoS especially during phosphate and magnesium starvation, but also in stationary phase and during nitrogen starvation. Its effect on RpoS stability is due to its interaction with RssB, which probably blocks the interaction of RssB with RpoS, and the consequent delivery of the RssB-RpoS complex to the ClpXP protein degradation pathway.</text>
</comment>
<comment type="subunit">
    <text evidence="1">Interacts with RssB.</text>
</comment>
<comment type="subcellular location">
    <subcellularLocation>
        <location evidence="1">Cytoplasm</location>
    </subcellularLocation>
</comment>
<comment type="similarity">
    <text evidence="1">Belongs to the IraP family.</text>
</comment>
<dbReference type="EMBL" id="CP001138">
    <property type="protein sequence ID" value="ACH48579.1"/>
    <property type="molecule type" value="Genomic_DNA"/>
</dbReference>
<dbReference type="RefSeq" id="WP_001518423.1">
    <property type="nucleotide sequence ID" value="NC_011149.1"/>
</dbReference>
<dbReference type="SMR" id="B5EWR4"/>
<dbReference type="KEGG" id="sea:SeAg_B0419"/>
<dbReference type="HOGENOM" id="CLU_169517_0_0_6"/>
<dbReference type="Proteomes" id="UP000008819">
    <property type="component" value="Chromosome"/>
</dbReference>
<dbReference type="GO" id="GO:0005737">
    <property type="term" value="C:cytoplasm"/>
    <property type="evidence" value="ECO:0007669"/>
    <property type="project" value="UniProtKB-SubCell"/>
</dbReference>
<dbReference type="GO" id="GO:0009267">
    <property type="term" value="P:cellular response to starvation"/>
    <property type="evidence" value="ECO:0007669"/>
    <property type="project" value="UniProtKB-UniRule"/>
</dbReference>
<dbReference type="HAMAP" id="MF_01198">
    <property type="entry name" value="Anti_adapt_IraP"/>
    <property type="match status" value="1"/>
</dbReference>
<dbReference type="InterPro" id="IPR019732">
    <property type="entry name" value="SigmaS_Anti-adapt_IraP"/>
</dbReference>
<dbReference type="NCBIfam" id="NF007598">
    <property type="entry name" value="PRK10244.1"/>
    <property type="match status" value="1"/>
</dbReference>
<dbReference type="Pfam" id="PF10796">
    <property type="entry name" value="Anti-adapt_IraP"/>
    <property type="match status" value="1"/>
</dbReference>
<proteinExistence type="inferred from homology"/>
<feature type="chain" id="PRO_1000138490" description="Anti-adapter protein IraP">
    <location>
        <begin position="1"/>
        <end position="86"/>
    </location>
</feature>
<feature type="coiled-coil region" evidence="1">
    <location>
        <begin position="1"/>
        <end position="36"/>
    </location>
</feature>
<organism>
    <name type="scientific">Salmonella agona (strain SL483)</name>
    <dbReference type="NCBI Taxonomy" id="454166"/>
    <lineage>
        <taxon>Bacteria</taxon>
        <taxon>Pseudomonadati</taxon>
        <taxon>Pseudomonadota</taxon>
        <taxon>Gammaproteobacteria</taxon>
        <taxon>Enterobacterales</taxon>
        <taxon>Enterobacteriaceae</taxon>
        <taxon>Salmonella</taxon>
    </lineage>
</organism>
<protein>
    <recommendedName>
        <fullName evidence="1">Anti-adapter protein IraP</fullName>
    </recommendedName>
</protein>
<name>IRAP_SALA4</name>
<evidence type="ECO:0000255" key="1">
    <source>
        <dbReference type="HAMAP-Rule" id="MF_01198"/>
    </source>
</evidence>
<keyword id="KW-0175">Coiled coil</keyword>
<keyword id="KW-0963">Cytoplasm</keyword>
<keyword id="KW-0346">Stress response</keyword>